<sequence>MKFVVASYGTRGDIEPCAAVGLELQRRGHDVCLAVPPNLIGFVETAGLSAVAYGSRDSQEQLDEQFLHNAWKLQNPIKLLREAMAPVTEGWAELSAMLTPVAAGADLLLTGQIYQEVVANVAEHHGIPLAALHFYPVRANGEIAFPARLPAPLVRSTITAIDWLYWRMTKGVEDAQRRELGLPKASTPAPRRMAVRGSLEIQAYDALCFPGLAAEWGGRRPFVGALTMESATDADDEVASWIAADTPPIYFGFGSMPIGSLADRVAMISAACAELGERALICSGPSDATGIPQFDHVKVVRVVSHAAVFPTCRAVVHHGGAGTTAAGLRAGIPTLILWVTSDQPIWAAQIKQLKVGRGRRFSSATKESLIADLRTILAPDYVTRAREIASRMTKPAASVTATADLLEDAARRAR</sequence>
<comment type="similarity">
    <text evidence="1">Belongs to the glycosyltransferase 28 family.</text>
</comment>
<protein>
    <recommendedName>
        <fullName>Uncharacterized glycosyltransferase Mb1551</fullName>
        <ecNumber>2.4.-.-</ecNumber>
    </recommendedName>
</protein>
<proteinExistence type="inferred from homology"/>
<keyword id="KW-0328">Glycosyltransferase</keyword>
<keyword id="KW-1185">Reference proteome</keyword>
<keyword id="KW-0808">Transferase</keyword>
<dbReference type="EC" id="2.4.-.-"/>
<dbReference type="EMBL" id="LT708304">
    <property type="protein sequence ID" value="SIU00154.1"/>
    <property type="molecule type" value="Genomic_DNA"/>
</dbReference>
<dbReference type="RefSeq" id="NP_855203.1">
    <property type="nucleotide sequence ID" value="NC_002945.3"/>
</dbReference>
<dbReference type="RefSeq" id="WP_003407671.1">
    <property type="nucleotide sequence ID" value="NC_002945.4"/>
</dbReference>
<dbReference type="SMR" id="P64866"/>
<dbReference type="KEGG" id="mbo:BQ2027_MB1551"/>
<dbReference type="PATRIC" id="fig|233413.5.peg.1696"/>
<dbReference type="Proteomes" id="UP000001419">
    <property type="component" value="Chromosome"/>
</dbReference>
<dbReference type="GO" id="GO:0016758">
    <property type="term" value="F:hexosyltransferase activity"/>
    <property type="evidence" value="ECO:0007669"/>
    <property type="project" value="InterPro"/>
</dbReference>
<dbReference type="GO" id="GO:0008194">
    <property type="term" value="F:UDP-glycosyltransferase activity"/>
    <property type="evidence" value="ECO:0007669"/>
    <property type="project" value="InterPro"/>
</dbReference>
<dbReference type="GO" id="GO:0005975">
    <property type="term" value="P:carbohydrate metabolic process"/>
    <property type="evidence" value="ECO:0007669"/>
    <property type="project" value="InterPro"/>
</dbReference>
<dbReference type="GO" id="GO:0030259">
    <property type="term" value="P:lipid glycosylation"/>
    <property type="evidence" value="ECO:0007669"/>
    <property type="project" value="InterPro"/>
</dbReference>
<dbReference type="GO" id="GO:0033072">
    <property type="term" value="P:vancomycin biosynthetic process"/>
    <property type="evidence" value="ECO:0007669"/>
    <property type="project" value="UniProtKB-ARBA"/>
</dbReference>
<dbReference type="CDD" id="cd03784">
    <property type="entry name" value="GT1_Gtf-like"/>
    <property type="match status" value="1"/>
</dbReference>
<dbReference type="FunFam" id="3.40.50.2000:FF:000170">
    <property type="entry name" value="Probable glycosyltransferase"/>
    <property type="match status" value="1"/>
</dbReference>
<dbReference type="FunFam" id="3.40.50.2000:FF:000009">
    <property type="entry name" value="Sterol 3-beta-glucosyltransferase UGT80A2"/>
    <property type="match status" value="1"/>
</dbReference>
<dbReference type="Gene3D" id="3.40.50.2000">
    <property type="entry name" value="Glycogen Phosphorylase B"/>
    <property type="match status" value="2"/>
</dbReference>
<dbReference type="InterPro" id="IPR010610">
    <property type="entry name" value="EryCIII-like_C"/>
</dbReference>
<dbReference type="InterPro" id="IPR050426">
    <property type="entry name" value="Glycosyltransferase_28"/>
</dbReference>
<dbReference type="InterPro" id="IPR004276">
    <property type="entry name" value="GlycoTrans_28_N"/>
</dbReference>
<dbReference type="InterPro" id="IPR002213">
    <property type="entry name" value="UDP_glucos_trans"/>
</dbReference>
<dbReference type="PANTHER" id="PTHR48050">
    <property type="entry name" value="STEROL 3-BETA-GLUCOSYLTRANSFERASE"/>
    <property type="match status" value="1"/>
</dbReference>
<dbReference type="PANTHER" id="PTHR48050:SF13">
    <property type="entry name" value="STEROL 3-BETA-GLUCOSYLTRANSFERASE UGT80A2"/>
    <property type="match status" value="1"/>
</dbReference>
<dbReference type="Pfam" id="PF06722">
    <property type="entry name" value="EryCIII-like_C"/>
    <property type="match status" value="1"/>
</dbReference>
<dbReference type="Pfam" id="PF03033">
    <property type="entry name" value="Glyco_transf_28"/>
    <property type="match status" value="1"/>
</dbReference>
<dbReference type="SUPFAM" id="SSF53756">
    <property type="entry name" value="UDP-Glycosyltransferase/glycogen phosphorylase"/>
    <property type="match status" value="1"/>
</dbReference>
<evidence type="ECO:0000305" key="1"/>
<name>Y1551_MYCBO</name>
<organism>
    <name type="scientific">Mycobacterium bovis (strain ATCC BAA-935 / AF2122/97)</name>
    <dbReference type="NCBI Taxonomy" id="233413"/>
    <lineage>
        <taxon>Bacteria</taxon>
        <taxon>Bacillati</taxon>
        <taxon>Actinomycetota</taxon>
        <taxon>Actinomycetes</taxon>
        <taxon>Mycobacteriales</taxon>
        <taxon>Mycobacteriaceae</taxon>
        <taxon>Mycobacterium</taxon>
        <taxon>Mycobacterium tuberculosis complex</taxon>
    </lineage>
</organism>
<gene>
    <name type="ordered locus">BQ2027_MB1551</name>
</gene>
<accession>P64866</accession>
<accession>A0A1R3XZI9</accession>
<accession>Q50583</accession>
<accession>X2BI44</accession>
<reference key="1">
    <citation type="journal article" date="2003" name="Proc. Natl. Acad. Sci. U.S.A.">
        <title>The complete genome sequence of Mycobacterium bovis.</title>
        <authorList>
            <person name="Garnier T."/>
            <person name="Eiglmeier K."/>
            <person name="Camus J.-C."/>
            <person name="Medina N."/>
            <person name="Mansoor H."/>
            <person name="Pryor M."/>
            <person name="Duthoy S."/>
            <person name="Grondin S."/>
            <person name="Lacroix C."/>
            <person name="Monsempe C."/>
            <person name="Simon S."/>
            <person name="Harris B."/>
            <person name="Atkin R."/>
            <person name="Doggett J."/>
            <person name="Mayes R."/>
            <person name="Keating L."/>
            <person name="Wheeler P.R."/>
            <person name="Parkhill J."/>
            <person name="Barrell B.G."/>
            <person name="Cole S.T."/>
            <person name="Gordon S.V."/>
            <person name="Hewinson R.G."/>
        </authorList>
    </citation>
    <scope>NUCLEOTIDE SEQUENCE [LARGE SCALE GENOMIC DNA]</scope>
    <source>
        <strain>ATCC BAA-935 / AF2122/97</strain>
    </source>
</reference>
<reference key="2">
    <citation type="journal article" date="2017" name="Genome Announc.">
        <title>Updated reference genome sequence and annotation of Mycobacterium bovis AF2122/97.</title>
        <authorList>
            <person name="Malone K.M."/>
            <person name="Farrell D."/>
            <person name="Stuber T.P."/>
            <person name="Schubert O.T."/>
            <person name="Aebersold R."/>
            <person name="Robbe-Austerman S."/>
            <person name="Gordon S.V."/>
        </authorList>
    </citation>
    <scope>NUCLEOTIDE SEQUENCE [LARGE SCALE GENOMIC DNA]</scope>
    <scope>GENOME REANNOTATION</scope>
    <source>
        <strain>ATCC BAA-935 / AF2122/97</strain>
    </source>
</reference>
<feature type="chain" id="PRO_0000215624" description="Uncharacterized glycosyltransferase Mb1551">
    <location>
        <begin position="1"/>
        <end position="414"/>
    </location>
</feature>